<reference key="1">
    <citation type="journal article" date="1971" name="J. Biol. Chem.">
        <title>Snake venom toxins. Purification, properties, and complete amino acid sequence of two toxins from Ringhals (Hemachatus haemachatus) venom.</title>
        <authorList>
            <person name="Strydom A.J.C."/>
            <person name="Botes D.P."/>
        </authorList>
    </citation>
    <scope>PROTEIN SEQUENCE</scope>
    <scope>TOXIC DOSE</scope>
    <scope>SUBCELLULAR LOCATION</scope>
    <source>
        <tissue>Venom</tissue>
    </source>
</reference>
<proteinExistence type="evidence at protein level"/>
<protein>
    <recommendedName>
        <fullName>Short neurotoxin 2</fullName>
    </recommendedName>
    <alternativeName>
        <fullName>Toxin IV</fullName>
    </alternativeName>
</protein>
<feature type="chain" id="PRO_0000093583" description="Short neurotoxin 2" evidence="3">
    <location>
        <begin position="1"/>
        <end position="61"/>
    </location>
</feature>
<feature type="disulfide bond" evidence="1">
    <location>
        <begin position="3"/>
        <end position="23"/>
    </location>
</feature>
<feature type="disulfide bond" evidence="1">
    <location>
        <begin position="17"/>
        <end position="40"/>
    </location>
</feature>
<feature type="disulfide bond" evidence="1">
    <location>
        <begin position="42"/>
        <end position="53"/>
    </location>
</feature>
<feature type="disulfide bond" evidence="1">
    <location>
        <begin position="54"/>
        <end position="59"/>
    </location>
</feature>
<organism>
    <name type="scientific">Hemachatus haemachatus</name>
    <name type="common">Rinkhals</name>
    <name type="synonym">Sepedon haemachatus</name>
    <dbReference type="NCBI Taxonomy" id="8626"/>
    <lineage>
        <taxon>Eukaryota</taxon>
        <taxon>Metazoa</taxon>
        <taxon>Chordata</taxon>
        <taxon>Craniata</taxon>
        <taxon>Vertebrata</taxon>
        <taxon>Euteleostomi</taxon>
        <taxon>Lepidosauria</taxon>
        <taxon>Squamata</taxon>
        <taxon>Bifurcata</taxon>
        <taxon>Unidentata</taxon>
        <taxon>Episquamata</taxon>
        <taxon>Toxicofera</taxon>
        <taxon>Serpentes</taxon>
        <taxon>Colubroidea</taxon>
        <taxon>Elapidae</taxon>
        <taxon>Elapinae</taxon>
        <taxon>Hemachatus</taxon>
    </lineage>
</organism>
<dbReference type="PIR" id="A01701">
    <property type="entry name" value="N1RI2"/>
</dbReference>
<dbReference type="SMR" id="P01433"/>
<dbReference type="GO" id="GO:0005576">
    <property type="term" value="C:extracellular region"/>
    <property type="evidence" value="ECO:0007669"/>
    <property type="project" value="UniProtKB-SubCell"/>
</dbReference>
<dbReference type="GO" id="GO:0030550">
    <property type="term" value="F:acetylcholine receptor inhibitor activity"/>
    <property type="evidence" value="ECO:0007669"/>
    <property type="project" value="UniProtKB-KW"/>
</dbReference>
<dbReference type="GO" id="GO:0099106">
    <property type="term" value="F:ion channel regulator activity"/>
    <property type="evidence" value="ECO:0007669"/>
    <property type="project" value="UniProtKB-KW"/>
</dbReference>
<dbReference type="GO" id="GO:0090729">
    <property type="term" value="F:toxin activity"/>
    <property type="evidence" value="ECO:0007669"/>
    <property type="project" value="UniProtKB-KW"/>
</dbReference>
<dbReference type="CDD" id="cd00206">
    <property type="entry name" value="TFP_snake_toxin"/>
    <property type="match status" value="1"/>
</dbReference>
<dbReference type="FunFam" id="2.10.60.10:FF:000024">
    <property type="entry name" value="Cytotoxin 1"/>
    <property type="match status" value="1"/>
</dbReference>
<dbReference type="Gene3D" id="2.10.60.10">
    <property type="entry name" value="CD59"/>
    <property type="match status" value="1"/>
</dbReference>
<dbReference type="InterPro" id="IPR003571">
    <property type="entry name" value="Snake_3FTx"/>
</dbReference>
<dbReference type="InterPro" id="IPR045860">
    <property type="entry name" value="Snake_toxin-like_sf"/>
</dbReference>
<dbReference type="InterPro" id="IPR018354">
    <property type="entry name" value="Snake_toxin_con_site"/>
</dbReference>
<dbReference type="InterPro" id="IPR054131">
    <property type="entry name" value="Toxin_cobra-type"/>
</dbReference>
<dbReference type="Pfam" id="PF21947">
    <property type="entry name" value="Toxin_cobra-type"/>
    <property type="match status" value="1"/>
</dbReference>
<dbReference type="SUPFAM" id="SSF57302">
    <property type="entry name" value="Snake toxin-like"/>
    <property type="match status" value="1"/>
</dbReference>
<dbReference type="PROSITE" id="PS00272">
    <property type="entry name" value="SNAKE_TOXIN"/>
    <property type="match status" value="1"/>
</dbReference>
<name>3S12_HEMHA</name>
<keyword id="KW-0008">Acetylcholine receptor inhibiting toxin</keyword>
<keyword id="KW-0903">Direct protein sequencing</keyword>
<keyword id="KW-1015">Disulfide bond</keyword>
<keyword id="KW-0872">Ion channel impairing toxin</keyword>
<keyword id="KW-0528">Neurotoxin</keyword>
<keyword id="KW-0629">Postsynaptic neurotoxin</keyword>
<keyword id="KW-0964">Secreted</keyword>
<keyword id="KW-0800">Toxin</keyword>
<evidence type="ECO:0000250" key="1">
    <source>
        <dbReference type="UniProtKB" id="P0C1Z0"/>
    </source>
</evidence>
<evidence type="ECO:0000250" key="2">
    <source>
        <dbReference type="UniProtKB" id="P60775"/>
    </source>
</evidence>
<evidence type="ECO:0000269" key="3">
    <source>
    </source>
</evidence>
<evidence type="ECO:0000305" key="4"/>
<comment type="function">
    <text evidence="2">Binds to muscle nicotinic acetylcholine receptor (nAChR) and inhibit acetylcholine from binding to the receptor, thereby impairing neuromuscular transmission.</text>
</comment>
<comment type="subcellular location">
    <subcellularLocation>
        <location evidence="3">Secreted</location>
    </subcellularLocation>
</comment>
<comment type="tissue specificity">
    <text evidence="4">Expressed by the venom gland.</text>
</comment>
<comment type="toxic dose">
    <text evidence="3">LD(50) is 0.09 mg/kg by intravenous injection.</text>
</comment>
<comment type="similarity">
    <text evidence="4">Belongs to the three-finger toxin family. Short-chain subfamily. Type I alpha-neurotoxin sub-subfamily.</text>
</comment>
<sequence>LECHNQQSSQTPTTQTCPGETNCYKKQWSDHRGSRTERGCGCPTVKPGIKLKCCTTDRCNK</sequence>
<accession>P01433</accession>